<accession>Q5HFB1</accession>
<keyword id="KW-0378">Hydrolase</keyword>
<keyword id="KW-0479">Metal-binding</keyword>
<keyword id="KW-0482">Metalloprotease</keyword>
<keyword id="KW-0645">Protease</keyword>
<keyword id="KW-0862">Zinc</keyword>
<gene>
    <name type="ordered locus">SACOL1707</name>
</gene>
<reference key="1">
    <citation type="journal article" date="2005" name="J. Bacteriol.">
        <title>Insights on evolution of virulence and resistance from the complete genome analysis of an early methicillin-resistant Staphylococcus aureus strain and a biofilm-producing methicillin-resistant Staphylococcus epidermidis strain.</title>
        <authorList>
            <person name="Gill S.R."/>
            <person name="Fouts D.E."/>
            <person name="Archer G.L."/>
            <person name="Mongodin E.F."/>
            <person name="DeBoy R.T."/>
            <person name="Ravel J."/>
            <person name="Paulsen I.T."/>
            <person name="Kolonay J.F."/>
            <person name="Brinkac L.M."/>
            <person name="Beanan M.J."/>
            <person name="Dodson R.J."/>
            <person name="Daugherty S.C."/>
            <person name="Madupu R."/>
            <person name="Angiuoli S.V."/>
            <person name="Durkin A.S."/>
            <person name="Haft D.H."/>
            <person name="Vamathevan J.J."/>
            <person name="Khouri H."/>
            <person name="Utterback T.R."/>
            <person name="Lee C."/>
            <person name="Dimitrov G."/>
            <person name="Jiang L."/>
            <person name="Qin H."/>
            <person name="Weidman J."/>
            <person name="Tran K."/>
            <person name="Kang K.H."/>
            <person name="Hance I.R."/>
            <person name="Nelson K.E."/>
            <person name="Fraser C.M."/>
        </authorList>
    </citation>
    <scope>NUCLEOTIDE SEQUENCE [LARGE SCALE GENOMIC DNA]</scope>
    <source>
        <strain>COL</strain>
    </source>
</reference>
<organism>
    <name type="scientific">Staphylococcus aureus (strain COL)</name>
    <dbReference type="NCBI Taxonomy" id="93062"/>
    <lineage>
        <taxon>Bacteria</taxon>
        <taxon>Bacillati</taxon>
        <taxon>Bacillota</taxon>
        <taxon>Bacilli</taxon>
        <taxon>Bacillales</taxon>
        <taxon>Staphylococcaceae</taxon>
        <taxon>Staphylococcus</taxon>
    </lineage>
</organism>
<protein>
    <recommendedName>
        <fullName>UPF0758 protein SACOL1707</fullName>
    </recommendedName>
</protein>
<sequence>MKIKEMVTSEMPRERLLSHGAKSLSNTELLAILINTGRKGFSSIDISNELLKSASNLNELKKSSINDLIKVKGIGLQKAITLKAAFELGERMGRRAENNRIKITQPSDVADYMIPTMKDLTQEHFVILLLNSKNVVIKETCVFKGTLNSSIVHPREIFSIAVRENANAIIAVHNHPSGDVTPSQEDIITTMRLKECGLILGIDLLDHIIIGDNRFTSLVEAGYFDEND</sequence>
<evidence type="ECO:0000255" key="1">
    <source>
        <dbReference type="PROSITE-ProRule" id="PRU01182"/>
    </source>
</evidence>
<evidence type="ECO:0000305" key="2"/>
<proteinExistence type="inferred from homology"/>
<feature type="chain" id="PRO_0000190731" description="UPF0758 protein SACOL1707">
    <location>
        <begin position="1"/>
        <end position="228"/>
    </location>
</feature>
<feature type="domain" description="MPN" evidence="1">
    <location>
        <begin position="102"/>
        <end position="224"/>
    </location>
</feature>
<feature type="short sequence motif" description="JAMM motif" evidence="1">
    <location>
        <begin position="173"/>
        <end position="186"/>
    </location>
</feature>
<feature type="binding site" evidence="1">
    <location>
        <position position="173"/>
    </location>
    <ligand>
        <name>Zn(2+)</name>
        <dbReference type="ChEBI" id="CHEBI:29105"/>
        <note>catalytic</note>
    </ligand>
</feature>
<feature type="binding site" evidence="1">
    <location>
        <position position="175"/>
    </location>
    <ligand>
        <name>Zn(2+)</name>
        <dbReference type="ChEBI" id="CHEBI:29105"/>
        <note>catalytic</note>
    </ligand>
</feature>
<feature type="binding site" evidence="1">
    <location>
        <position position="186"/>
    </location>
    <ligand>
        <name>Zn(2+)</name>
        <dbReference type="ChEBI" id="CHEBI:29105"/>
        <note>catalytic</note>
    </ligand>
</feature>
<dbReference type="EMBL" id="CP000046">
    <property type="protein sequence ID" value="AAW36813.1"/>
    <property type="molecule type" value="Genomic_DNA"/>
</dbReference>
<dbReference type="SMR" id="Q5HFB1"/>
<dbReference type="KEGG" id="sac:SACOL1707"/>
<dbReference type="HOGENOM" id="CLU_073529_0_2_9"/>
<dbReference type="Proteomes" id="UP000000530">
    <property type="component" value="Chromosome"/>
</dbReference>
<dbReference type="GO" id="GO:0046872">
    <property type="term" value="F:metal ion binding"/>
    <property type="evidence" value="ECO:0007669"/>
    <property type="project" value="UniProtKB-KW"/>
</dbReference>
<dbReference type="GO" id="GO:0008237">
    <property type="term" value="F:metallopeptidase activity"/>
    <property type="evidence" value="ECO:0007669"/>
    <property type="project" value="UniProtKB-KW"/>
</dbReference>
<dbReference type="GO" id="GO:0006508">
    <property type="term" value="P:proteolysis"/>
    <property type="evidence" value="ECO:0007669"/>
    <property type="project" value="UniProtKB-KW"/>
</dbReference>
<dbReference type="CDD" id="cd08071">
    <property type="entry name" value="MPN_DUF2466"/>
    <property type="match status" value="1"/>
</dbReference>
<dbReference type="Gene3D" id="3.40.140.10">
    <property type="entry name" value="Cytidine Deaminase, domain 2"/>
    <property type="match status" value="1"/>
</dbReference>
<dbReference type="InterPro" id="IPR037518">
    <property type="entry name" value="MPN"/>
</dbReference>
<dbReference type="InterPro" id="IPR025657">
    <property type="entry name" value="RadC_JAB"/>
</dbReference>
<dbReference type="InterPro" id="IPR010994">
    <property type="entry name" value="RuvA_2-like"/>
</dbReference>
<dbReference type="InterPro" id="IPR001405">
    <property type="entry name" value="UPF0758"/>
</dbReference>
<dbReference type="InterPro" id="IPR020891">
    <property type="entry name" value="UPF0758_CS"/>
</dbReference>
<dbReference type="InterPro" id="IPR046778">
    <property type="entry name" value="UPF0758_N"/>
</dbReference>
<dbReference type="NCBIfam" id="NF000642">
    <property type="entry name" value="PRK00024.1"/>
    <property type="match status" value="1"/>
</dbReference>
<dbReference type="NCBIfam" id="TIGR00608">
    <property type="entry name" value="radc"/>
    <property type="match status" value="1"/>
</dbReference>
<dbReference type="PANTHER" id="PTHR30471">
    <property type="entry name" value="DNA REPAIR PROTEIN RADC"/>
    <property type="match status" value="1"/>
</dbReference>
<dbReference type="PANTHER" id="PTHR30471:SF3">
    <property type="entry name" value="UPF0758 PROTEIN YEES-RELATED"/>
    <property type="match status" value="1"/>
</dbReference>
<dbReference type="Pfam" id="PF04002">
    <property type="entry name" value="RadC"/>
    <property type="match status" value="1"/>
</dbReference>
<dbReference type="Pfam" id="PF20582">
    <property type="entry name" value="UPF0758_N"/>
    <property type="match status" value="1"/>
</dbReference>
<dbReference type="SUPFAM" id="SSF102712">
    <property type="entry name" value="JAB1/MPN domain"/>
    <property type="match status" value="1"/>
</dbReference>
<dbReference type="SUPFAM" id="SSF47781">
    <property type="entry name" value="RuvA domain 2-like"/>
    <property type="match status" value="1"/>
</dbReference>
<dbReference type="PROSITE" id="PS50249">
    <property type="entry name" value="MPN"/>
    <property type="match status" value="1"/>
</dbReference>
<dbReference type="PROSITE" id="PS01302">
    <property type="entry name" value="UPF0758"/>
    <property type="match status" value="1"/>
</dbReference>
<name>Y1707_STAAC</name>
<comment type="similarity">
    <text evidence="2">Belongs to the UPF0758 family.</text>
</comment>